<feature type="chain" id="PRO_0000385998" description="GTPase Obg">
    <location>
        <begin position="1"/>
        <end position="428"/>
    </location>
</feature>
<feature type="domain" description="Obg" evidence="3">
    <location>
        <begin position="1"/>
        <end position="158"/>
    </location>
</feature>
<feature type="domain" description="OBG-type G" evidence="1">
    <location>
        <begin position="159"/>
        <end position="328"/>
    </location>
</feature>
<feature type="domain" description="OCT" evidence="2">
    <location>
        <begin position="350"/>
        <end position="428"/>
    </location>
</feature>
<feature type="binding site" evidence="1">
    <location>
        <begin position="165"/>
        <end position="172"/>
    </location>
    <ligand>
        <name>GTP</name>
        <dbReference type="ChEBI" id="CHEBI:37565"/>
    </ligand>
</feature>
<feature type="binding site" evidence="1">
    <location>
        <position position="172"/>
    </location>
    <ligand>
        <name>Mg(2+)</name>
        <dbReference type="ChEBI" id="CHEBI:18420"/>
    </ligand>
</feature>
<feature type="binding site" evidence="1">
    <location>
        <begin position="190"/>
        <end position="194"/>
    </location>
    <ligand>
        <name>GTP</name>
        <dbReference type="ChEBI" id="CHEBI:37565"/>
    </ligand>
</feature>
<feature type="binding site" evidence="1">
    <location>
        <position position="192"/>
    </location>
    <ligand>
        <name>Mg(2+)</name>
        <dbReference type="ChEBI" id="CHEBI:18420"/>
    </ligand>
</feature>
<feature type="binding site" evidence="1">
    <location>
        <begin position="212"/>
        <end position="215"/>
    </location>
    <ligand>
        <name>GTP</name>
        <dbReference type="ChEBI" id="CHEBI:37565"/>
    </ligand>
</feature>
<feature type="binding site" evidence="1">
    <location>
        <begin position="282"/>
        <end position="285"/>
    </location>
    <ligand>
        <name>GTP</name>
        <dbReference type="ChEBI" id="CHEBI:37565"/>
    </ligand>
</feature>
<feature type="binding site" evidence="1">
    <location>
        <begin position="309"/>
        <end position="311"/>
    </location>
    <ligand>
        <name>GTP</name>
        <dbReference type="ChEBI" id="CHEBI:37565"/>
    </ligand>
</feature>
<dbReference type="EC" id="3.6.5.-" evidence="1"/>
<dbReference type="EMBL" id="AE017198">
    <property type="protein sequence ID" value="AAS08892.1"/>
    <property type="molecule type" value="Genomic_DNA"/>
</dbReference>
<dbReference type="SMR" id="Q74JN7"/>
<dbReference type="KEGG" id="ljo:LJ_1071"/>
<dbReference type="eggNOG" id="COG0536">
    <property type="taxonomic scope" value="Bacteria"/>
</dbReference>
<dbReference type="HOGENOM" id="CLU_011747_2_1_9"/>
<dbReference type="Proteomes" id="UP000000581">
    <property type="component" value="Chromosome"/>
</dbReference>
<dbReference type="GO" id="GO:0005737">
    <property type="term" value="C:cytoplasm"/>
    <property type="evidence" value="ECO:0007669"/>
    <property type="project" value="UniProtKB-SubCell"/>
</dbReference>
<dbReference type="GO" id="GO:0005525">
    <property type="term" value="F:GTP binding"/>
    <property type="evidence" value="ECO:0007669"/>
    <property type="project" value="UniProtKB-UniRule"/>
</dbReference>
<dbReference type="GO" id="GO:0003924">
    <property type="term" value="F:GTPase activity"/>
    <property type="evidence" value="ECO:0007669"/>
    <property type="project" value="UniProtKB-UniRule"/>
</dbReference>
<dbReference type="GO" id="GO:0000287">
    <property type="term" value="F:magnesium ion binding"/>
    <property type="evidence" value="ECO:0007669"/>
    <property type="project" value="InterPro"/>
</dbReference>
<dbReference type="GO" id="GO:0042254">
    <property type="term" value="P:ribosome biogenesis"/>
    <property type="evidence" value="ECO:0007669"/>
    <property type="project" value="UniProtKB-UniRule"/>
</dbReference>
<dbReference type="CDD" id="cd01898">
    <property type="entry name" value="Obg"/>
    <property type="match status" value="1"/>
</dbReference>
<dbReference type="FunFam" id="2.70.210.12:FF:000001">
    <property type="entry name" value="GTPase Obg"/>
    <property type="match status" value="1"/>
</dbReference>
<dbReference type="Gene3D" id="3.30.300.350">
    <property type="entry name" value="GTP-binding protein OBG, C-terminal domain"/>
    <property type="match status" value="1"/>
</dbReference>
<dbReference type="Gene3D" id="2.70.210.12">
    <property type="entry name" value="GTP1/OBG domain"/>
    <property type="match status" value="1"/>
</dbReference>
<dbReference type="Gene3D" id="3.40.50.300">
    <property type="entry name" value="P-loop containing nucleotide triphosphate hydrolases"/>
    <property type="match status" value="1"/>
</dbReference>
<dbReference type="HAMAP" id="MF_01454">
    <property type="entry name" value="GTPase_Obg"/>
    <property type="match status" value="1"/>
</dbReference>
<dbReference type="InterPro" id="IPR031167">
    <property type="entry name" value="G_OBG"/>
</dbReference>
<dbReference type="InterPro" id="IPR006073">
    <property type="entry name" value="GTP-bd"/>
</dbReference>
<dbReference type="InterPro" id="IPR014100">
    <property type="entry name" value="GTP-bd_Obg/CgtA"/>
</dbReference>
<dbReference type="InterPro" id="IPR036346">
    <property type="entry name" value="GTP-bd_prot_GTP1/OBG_C_sf"/>
</dbReference>
<dbReference type="InterPro" id="IPR006074">
    <property type="entry name" value="GTP1-OBG_CS"/>
</dbReference>
<dbReference type="InterPro" id="IPR006169">
    <property type="entry name" value="GTP1_OBG_dom"/>
</dbReference>
<dbReference type="InterPro" id="IPR036726">
    <property type="entry name" value="GTP1_OBG_dom_sf"/>
</dbReference>
<dbReference type="InterPro" id="IPR045086">
    <property type="entry name" value="OBG_GTPase"/>
</dbReference>
<dbReference type="InterPro" id="IPR015349">
    <property type="entry name" value="OCT_dom"/>
</dbReference>
<dbReference type="InterPro" id="IPR027417">
    <property type="entry name" value="P-loop_NTPase"/>
</dbReference>
<dbReference type="NCBIfam" id="TIGR02729">
    <property type="entry name" value="Obg_CgtA"/>
    <property type="match status" value="1"/>
</dbReference>
<dbReference type="NCBIfam" id="TIGR03595">
    <property type="entry name" value="Obg_CgtA_exten"/>
    <property type="match status" value="1"/>
</dbReference>
<dbReference type="NCBIfam" id="NF008954">
    <property type="entry name" value="PRK12296.1"/>
    <property type="match status" value="1"/>
</dbReference>
<dbReference type="NCBIfam" id="NF008955">
    <property type="entry name" value="PRK12297.1"/>
    <property type="match status" value="1"/>
</dbReference>
<dbReference type="NCBIfam" id="NF008956">
    <property type="entry name" value="PRK12299.1"/>
    <property type="match status" value="1"/>
</dbReference>
<dbReference type="PANTHER" id="PTHR11702">
    <property type="entry name" value="DEVELOPMENTALLY REGULATED GTP-BINDING PROTEIN-RELATED"/>
    <property type="match status" value="1"/>
</dbReference>
<dbReference type="PANTHER" id="PTHR11702:SF31">
    <property type="entry name" value="MITOCHONDRIAL RIBOSOME-ASSOCIATED GTPASE 2"/>
    <property type="match status" value="1"/>
</dbReference>
<dbReference type="Pfam" id="PF09269">
    <property type="entry name" value="DUF1967"/>
    <property type="match status" value="1"/>
</dbReference>
<dbReference type="Pfam" id="PF01018">
    <property type="entry name" value="GTP1_OBG"/>
    <property type="match status" value="1"/>
</dbReference>
<dbReference type="Pfam" id="PF01926">
    <property type="entry name" value="MMR_HSR1"/>
    <property type="match status" value="1"/>
</dbReference>
<dbReference type="PIRSF" id="PIRSF002401">
    <property type="entry name" value="GTP_bd_Obg/CgtA"/>
    <property type="match status" value="1"/>
</dbReference>
<dbReference type="PRINTS" id="PR00326">
    <property type="entry name" value="GTP1OBG"/>
</dbReference>
<dbReference type="SUPFAM" id="SSF102741">
    <property type="entry name" value="Obg GTP-binding protein C-terminal domain"/>
    <property type="match status" value="1"/>
</dbReference>
<dbReference type="SUPFAM" id="SSF82051">
    <property type="entry name" value="Obg GTP-binding protein N-terminal domain"/>
    <property type="match status" value="1"/>
</dbReference>
<dbReference type="SUPFAM" id="SSF52540">
    <property type="entry name" value="P-loop containing nucleoside triphosphate hydrolases"/>
    <property type="match status" value="1"/>
</dbReference>
<dbReference type="PROSITE" id="PS51710">
    <property type="entry name" value="G_OBG"/>
    <property type="match status" value="1"/>
</dbReference>
<dbReference type="PROSITE" id="PS00905">
    <property type="entry name" value="GTP1_OBG"/>
    <property type="match status" value="1"/>
</dbReference>
<dbReference type="PROSITE" id="PS51883">
    <property type="entry name" value="OBG"/>
    <property type="match status" value="1"/>
</dbReference>
<dbReference type="PROSITE" id="PS51881">
    <property type="entry name" value="OCT"/>
    <property type="match status" value="1"/>
</dbReference>
<name>OBG_LACJO</name>
<gene>
    <name evidence="1" type="primary">obg</name>
    <name type="ordered locus">LJ_1071</name>
</gene>
<keyword id="KW-0963">Cytoplasm</keyword>
<keyword id="KW-0342">GTP-binding</keyword>
<keyword id="KW-0378">Hydrolase</keyword>
<keyword id="KW-0460">Magnesium</keyword>
<keyword id="KW-0479">Metal-binding</keyword>
<keyword id="KW-0547">Nucleotide-binding</keyword>
<proteinExistence type="inferred from homology"/>
<evidence type="ECO:0000255" key="1">
    <source>
        <dbReference type="HAMAP-Rule" id="MF_01454"/>
    </source>
</evidence>
<evidence type="ECO:0000255" key="2">
    <source>
        <dbReference type="PROSITE-ProRule" id="PRU01229"/>
    </source>
</evidence>
<evidence type="ECO:0000255" key="3">
    <source>
        <dbReference type="PROSITE-ProRule" id="PRU01231"/>
    </source>
</evidence>
<reference key="1">
    <citation type="journal article" date="2004" name="Proc. Natl. Acad. Sci. U.S.A.">
        <title>The genome sequence of the probiotic intestinal bacterium Lactobacillus johnsonii NCC 533.</title>
        <authorList>
            <person name="Pridmore R.D."/>
            <person name="Berger B."/>
            <person name="Desiere F."/>
            <person name="Vilanova D."/>
            <person name="Barretto C."/>
            <person name="Pittet A.-C."/>
            <person name="Zwahlen M.-C."/>
            <person name="Rouvet M."/>
            <person name="Altermann E."/>
            <person name="Barrangou R."/>
            <person name="Mollet B."/>
            <person name="Mercenier A."/>
            <person name="Klaenhammer T."/>
            <person name="Arigoni F."/>
            <person name="Schell M.A."/>
        </authorList>
    </citation>
    <scope>NUCLEOTIDE SEQUENCE [LARGE SCALE GENOMIC DNA]</scope>
    <source>
        <strain>CNCM I-1225 / La1 / NCC 533</strain>
    </source>
</reference>
<organism>
    <name type="scientific">Lactobacillus johnsonii (strain CNCM I-12250 / La1 / NCC 533)</name>
    <dbReference type="NCBI Taxonomy" id="257314"/>
    <lineage>
        <taxon>Bacteria</taxon>
        <taxon>Bacillati</taxon>
        <taxon>Bacillota</taxon>
        <taxon>Bacilli</taxon>
        <taxon>Lactobacillales</taxon>
        <taxon>Lactobacillaceae</taxon>
        <taxon>Lactobacillus</taxon>
    </lineage>
</organism>
<accession>Q74JN7</accession>
<protein>
    <recommendedName>
        <fullName evidence="1">GTPase Obg</fullName>
        <ecNumber evidence="1">3.6.5.-</ecNumber>
    </recommendedName>
    <alternativeName>
        <fullName evidence="1">GTP-binding protein Obg</fullName>
    </alternativeName>
</protein>
<sequence length="428" mass="46619">MFVDQTKIDVQAGKGGDGAVAFRHEKYVPLGGPAGGDGGRGGSIILVADSGLRTLMDFRFRRKFKADNGENGRIKSQYGRGAKDVRLKVPMGTSVYDFNTGELLGDLVENGQELVVAHGGKGGRGNIHFATPTRTAPEIAENGEPGEFRTLRLELKVLADVGLVGFPSVGKSTLLSVVTKAKPKIAAYEFTTLTPNLGMVVLPDGRDFSMADLPGLIEGASKGVGLGIQFLRHVERTKVILHLVSMDPNNGRDAYEDYETIRKELAGYTKDLTTKKEIIVATQMDIPGSEEKFAEFKKKLGDKTVYPISSVTHKGVSELMGKTADLVEEVAKEEAEKPAEIKVAEKEYVYKKPEDEGFKVERTGEHSFVVTGNKLERLVQRTNLDHTDGIMLLARKLKRLGVDEALRENGAVTGDDVSIADFTFEFVD</sequence>
<comment type="function">
    <text evidence="1">An essential GTPase which binds GTP, GDP and possibly (p)ppGpp with moderate affinity, with high nucleotide exchange rates and a fairly low GTP hydrolysis rate. Plays a role in control of the cell cycle, stress response, ribosome biogenesis and in those bacteria that undergo differentiation, in morphogenesis control.</text>
</comment>
<comment type="cofactor">
    <cofactor evidence="1">
        <name>Mg(2+)</name>
        <dbReference type="ChEBI" id="CHEBI:18420"/>
    </cofactor>
</comment>
<comment type="subunit">
    <text evidence="1">Monomer.</text>
</comment>
<comment type="subcellular location">
    <subcellularLocation>
        <location evidence="1">Cytoplasm</location>
    </subcellularLocation>
</comment>
<comment type="similarity">
    <text evidence="1">Belongs to the TRAFAC class OBG-HflX-like GTPase superfamily. OBG GTPase family.</text>
</comment>